<accession>Q9CM00</accession>
<proteinExistence type="evidence at protein level"/>
<comment type="function">
    <text evidence="2">Synthesizes glutathione from L-glutamate and L-cysteine via gamma-L-glutamyl-L-cysteine.</text>
</comment>
<comment type="catalytic activity">
    <reaction evidence="2">
        <text>L-cysteine + L-glutamate + ATP = gamma-L-glutamyl-L-cysteine + ADP + phosphate + H(+)</text>
        <dbReference type="Rhea" id="RHEA:13285"/>
        <dbReference type="ChEBI" id="CHEBI:15378"/>
        <dbReference type="ChEBI" id="CHEBI:29985"/>
        <dbReference type="ChEBI" id="CHEBI:30616"/>
        <dbReference type="ChEBI" id="CHEBI:35235"/>
        <dbReference type="ChEBI" id="CHEBI:43474"/>
        <dbReference type="ChEBI" id="CHEBI:58173"/>
        <dbReference type="ChEBI" id="CHEBI:456216"/>
        <dbReference type="EC" id="6.3.2.2"/>
    </reaction>
</comment>
<comment type="catalytic activity">
    <reaction evidence="2">
        <text>gamma-L-glutamyl-L-cysteine + glycine + ATP = glutathione + ADP + phosphate + H(+)</text>
        <dbReference type="Rhea" id="RHEA:13557"/>
        <dbReference type="ChEBI" id="CHEBI:15378"/>
        <dbReference type="ChEBI" id="CHEBI:30616"/>
        <dbReference type="ChEBI" id="CHEBI:43474"/>
        <dbReference type="ChEBI" id="CHEBI:57305"/>
        <dbReference type="ChEBI" id="CHEBI:57925"/>
        <dbReference type="ChEBI" id="CHEBI:58173"/>
        <dbReference type="ChEBI" id="CHEBI:456216"/>
        <dbReference type="EC" id="6.3.2.3"/>
    </reaction>
</comment>
<comment type="cofactor">
    <cofactor evidence="1">
        <name>Mg(2+)</name>
        <dbReference type="ChEBI" id="CHEBI:18420"/>
    </cofactor>
    <cofactor evidence="1">
        <name>Mn(2+)</name>
        <dbReference type="ChEBI" id="CHEBI:29035"/>
    </cofactor>
    <text evidence="1">Binds 2 magnesium or manganese ions per subunit.</text>
</comment>
<comment type="pathway">
    <text evidence="2">Sulfur metabolism; glutathione biosynthesis; glutathione from L-cysteine and L-glutamate: step 1/2.</text>
</comment>
<comment type="pathway">
    <text evidence="2">Sulfur metabolism; glutathione biosynthesis; glutathione from L-cysteine and L-glutamate: step 2/2.</text>
</comment>
<comment type="subunit">
    <text evidence="2">Monomer.</text>
</comment>
<comment type="similarity">
    <text evidence="2">In the N-terminal section; belongs to the glutamate--cysteine ligase type 1 family. Type 2 subfamily.</text>
</comment>
<reference key="1">
    <citation type="journal article" date="2001" name="Proc. Natl. Acad. Sci. U.S.A.">
        <title>Complete genomic sequence of Pasteurella multocida Pm70.</title>
        <authorList>
            <person name="May B.J."/>
            <person name="Zhang Q."/>
            <person name="Li L.L."/>
            <person name="Paustian M.L."/>
            <person name="Whittam T.S."/>
            <person name="Kapur V."/>
        </authorList>
    </citation>
    <scope>NUCLEOTIDE SEQUENCE [LARGE SCALE GENOMIC DNA]</scope>
    <source>
        <strain>Pm70</strain>
    </source>
</reference>
<organism>
    <name type="scientific">Pasteurella multocida (strain Pm70)</name>
    <dbReference type="NCBI Taxonomy" id="272843"/>
    <lineage>
        <taxon>Bacteria</taxon>
        <taxon>Pseudomonadati</taxon>
        <taxon>Pseudomonadota</taxon>
        <taxon>Gammaproteobacteria</taxon>
        <taxon>Pasteurellales</taxon>
        <taxon>Pasteurellaceae</taxon>
        <taxon>Pasteurella</taxon>
    </lineage>
</organism>
<protein>
    <recommendedName>
        <fullName evidence="2">Glutathione biosynthesis bifunctional protein GshAB</fullName>
    </recommendedName>
    <alternativeName>
        <fullName evidence="2">Gamma-GCS-GS</fullName>
        <shortName evidence="2">GCS-GS</shortName>
    </alternativeName>
    <domain>
        <recommendedName>
            <fullName evidence="2">Glutamate--cysteine ligase</fullName>
            <ecNumber evidence="2">6.3.2.2</ecNumber>
        </recommendedName>
        <alternativeName>
            <fullName evidence="2">Gamma-ECS</fullName>
            <shortName evidence="2">GCS</shortName>
        </alternativeName>
        <alternativeName>
            <fullName evidence="2">Gamma-glutamylcysteine synthetase</fullName>
        </alternativeName>
    </domain>
    <domain>
        <recommendedName>
            <fullName evidence="2">Glutathione synthetase</fullName>
            <ecNumber evidence="2">6.3.2.3</ecNumber>
        </recommendedName>
        <alternativeName>
            <fullName evidence="2">GSH synthetase</fullName>
            <shortName evidence="2">GS</shortName>
            <shortName evidence="2">GSH-S</shortName>
            <shortName evidence="2">GSHase</shortName>
        </alternativeName>
        <alternativeName>
            <fullName evidence="2">Glutathione synthase</fullName>
        </alternativeName>
    </domain>
</protein>
<feature type="chain" id="PRO_0000192557" description="Glutathione biosynthesis bifunctional protein GshAB">
    <location>
        <begin position="1"/>
        <end position="757"/>
    </location>
</feature>
<feature type="domain" description="ATP-grasp" evidence="2">
    <location>
        <begin position="494"/>
        <end position="753"/>
    </location>
</feature>
<feature type="region of interest" description="Glutamate--cysteine ligase">
    <location>
        <begin position="1"/>
        <end position="337"/>
    </location>
</feature>
<feature type="binding site" evidence="2">
    <location>
        <begin position="521"/>
        <end position="580"/>
    </location>
    <ligand>
        <name>ATP</name>
        <dbReference type="ChEBI" id="CHEBI:30616"/>
    </ligand>
</feature>
<feature type="binding site" evidence="2">
    <location>
        <position position="702"/>
    </location>
    <ligand>
        <name>Mg(2+)</name>
        <dbReference type="ChEBI" id="CHEBI:18420"/>
        <label>1</label>
    </ligand>
</feature>
<feature type="binding site" evidence="2">
    <location>
        <position position="702"/>
    </location>
    <ligand>
        <name>Mn(2+)</name>
        <dbReference type="ChEBI" id="CHEBI:29035"/>
        <label>1</label>
    </ligand>
</feature>
<feature type="binding site" evidence="2">
    <location>
        <position position="723"/>
    </location>
    <ligand>
        <name>Mg(2+)</name>
        <dbReference type="ChEBI" id="CHEBI:18420"/>
        <label>1</label>
    </ligand>
</feature>
<feature type="binding site" evidence="2">
    <location>
        <position position="723"/>
    </location>
    <ligand>
        <name>Mg(2+)</name>
        <dbReference type="ChEBI" id="CHEBI:18420"/>
        <label>2</label>
    </ligand>
</feature>
<feature type="binding site" evidence="2">
    <location>
        <position position="723"/>
    </location>
    <ligand>
        <name>Mn(2+)</name>
        <dbReference type="ChEBI" id="CHEBI:29035"/>
        <label>1</label>
    </ligand>
</feature>
<feature type="binding site" evidence="2">
    <location>
        <position position="723"/>
    </location>
    <ligand>
        <name>Mn(2+)</name>
        <dbReference type="ChEBI" id="CHEBI:29035"/>
        <label>2</label>
    </ligand>
</feature>
<feature type="binding site" evidence="2">
    <location>
        <position position="725"/>
    </location>
    <ligand>
        <name>Mg(2+)</name>
        <dbReference type="ChEBI" id="CHEBI:18420"/>
        <label>2</label>
    </ligand>
</feature>
<feature type="binding site" evidence="2">
    <location>
        <position position="725"/>
    </location>
    <ligand>
        <name>Mn(2+)</name>
        <dbReference type="ChEBI" id="CHEBI:29035"/>
        <label>2</label>
    </ligand>
</feature>
<feature type="helix" evidence="3">
    <location>
        <begin position="5"/>
        <end position="10"/>
    </location>
</feature>
<feature type="helix" evidence="3">
    <location>
        <begin position="13"/>
        <end position="17"/>
    </location>
</feature>
<feature type="strand" evidence="3">
    <location>
        <begin position="19"/>
        <end position="28"/>
    </location>
</feature>
<feature type="strand" evidence="3">
    <location>
        <begin position="34"/>
        <end position="36"/>
    </location>
</feature>
<feature type="strand" evidence="3">
    <location>
        <begin position="43"/>
        <end position="45"/>
    </location>
</feature>
<feature type="turn" evidence="3">
    <location>
        <begin position="48"/>
        <end position="50"/>
    </location>
</feature>
<feature type="strand" evidence="3">
    <location>
        <begin position="52"/>
        <end position="55"/>
    </location>
</feature>
<feature type="strand" evidence="3">
    <location>
        <begin position="57"/>
        <end position="59"/>
    </location>
</feature>
<feature type="strand" evidence="3">
    <location>
        <begin position="62"/>
        <end position="72"/>
    </location>
</feature>
<feature type="helix" evidence="3">
    <location>
        <begin position="73"/>
        <end position="90"/>
    </location>
</feature>
<feature type="strand" evidence="3">
    <location>
        <begin position="100"/>
        <end position="102"/>
    </location>
</feature>
<feature type="turn" evidence="3">
    <location>
        <begin position="109"/>
        <end position="111"/>
    </location>
</feature>
<feature type="helix" evidence="3">
    <location>
        <begin position="120"/>
        <end position="133"/>
    </location>
</feature>
<feature type="helix" evidence="3">
    <location>
        <begin position="136"/>
        <end position="139"/>
    </location>
</feature>
<feature type="strand" evidence="3">
    <location>
        <begin position="144"/>
        <end position="149"/>
    </location>
</feature>
<feature type="helix" evidence="3">
    <location>
        <begin position="151"/>
        <end position="160"/>
    </location>
</feature>
<feature type="turn" evidence="3">
    <location>
        <begin position="162"/>
        <end position="164"/>
    </location>
</feature>
<feature type="helix" evidence="3">
    <location>
        <begin position="167"/>
        <end position="192"/>
    </location>
</feature>
<feature type="turn" evidence="3">
    <location>
        <begin position="204"/>
        <end position="206"/>
    </location>
</feature>
<feature type="strand" evidence="3">
    <location>
        <begin position="217"/>
        <end position="219"/>
    </location>
</feature>
<feature type="strand" evidence="3">
    <location>
        <begin position="222"/>
        <end position="225"/>
    </location>
</feature>
<feature type="helix" evidence="3">
    <location>
        <begin position="239"/>
        <end position="251"/>
    </location>
</feature>
<feature type="strand" evidence="3">
    <location>
        <begin position="256"/>
        <end position="258"/>
    </location>
</feature>
<feature type="strand" evidence="3">
    <location>
        <begin position="264"/>
        <end position="269"/>
    </location>
</feature>
<feature type="helix" evidence="3">
    <location>
        <begin position="273"/>
        <end position="275"/>
    </location>
</feature>
<feature type="helix" evidence="3">
    <location>
        <begin position="276"/>
        <end position="279"/>
    </location>
</feature>
<feature type="strand" evidence="3">
    <location>
        <begin position="283"/>
        <end position="286"/>
    </location>
</feature>
<feature type="helix" evidence="3">
    <location>
        <begin position="301"/>
        <end position="316"/>
    </location>
</feature>
<feature type="helix" evidence="3">
    <location>
        <begin position="323"/>
        <end position="338"/>
    </location>
</feature>
<feature type="helix" evidence="3">
    <location>
        <begin position="348"/>
        <end position="364"/>
    </location>
</feature>
<feature type="helix" evidence="3">
    <location>
        <begin position="369"/>
        <end position="383"/>
    </location>
</feature>
<feature type="helix" evidence="3">
    <location>
        <begin position="385"/>
        <end position="387"/>
    </location>
</feature>
<feature type="helix" evidence="3">
    <location>
        <begin position="389"/>
        <end position="399"/>
    </location>
</feature>
<feature type="strand" evidence="3">
    <location>
        <begin position="400"/>
        <end position="402"/>
    </location>
</feature>
<feature type="helix" evidence="3">
    <location>
        <begin position="403"/>
        <end position="419"/>
    </location>
</feature>
<feature type="turn" evidence="3">
    <location>
        <begin position="420"/>
        <end position="423"/>
    </location>
</feature>
<feature type="turn" evidence="3">
    <location>
        <begin position="427"/>
        <end position="430"/>
    </location>
</feature>
<feature type="helix" evidence="3">
    <location>
        <begin position="433"/>
        <end position="445"/>
    </location>
</feature>
<feature type="strand" evidence="3">
    <location>
        <begin position="448"/>
        <end position="453"/>
    </location>
</feature>
<feature type="turn" evidence="3">
    <location>
        <begin position="454"/>
        <end position="457"/>
    </location>
</feature>
<feature type="strand" evidence="3">
    <location>
        <begin position="458"/>
        <end position="463"/>
    </location>
</feature>
<feature type="strand" evidence="3">
    <location>
        <begin position="466"/>
        <end position="471"/>
    </location>
</feature>
<feature type="turn" evidence="3">
    <location>
        <begin position="472"/>
        <end position="474"/>
    </location>
</feature>
<feature type="strand" evidence="3">
    <location>
        <begin position="477"/>
        <end position="481"/>
    </location>
</feature>
<feature type="helix" evidence="3">
    <location>
        <begin position="482"/>
        <end position="489"/>
    </location>
</feature>
<feature type="helix" evidence="3">
    <location>
        <begin position="491"/>
        <end position="500"/>
    </location>
</feature>
<feature type="strand" evidence="3">
    <location>
        <begin position="507"/>
        <end position="511"/>
    </location>
</feature>
<feature type="helix" evidence="3">
    <location>
        <begin position="513"/>
        <end position="518"/>
    </location>
</feature>
<feature type="helix" evidence="3">
    <location>
        <begin position="519"/>
        <end position="522"/>
    </location>
</feature>
<feature type="strand" evidence="3">
    <location>
        <begin position="523"/>
        <end position="526"/>
    </location>
</feature>
<feature type="strand" evidence="3">
    <location>
        <begin position="528"/>
        <end position="534"/>
    </location>
</feature>
<feature type="turn" evidence="3">
    <location>
        <begin position="537"/>
        <end position="540"/>
    </location>
</feature>
<feature type="helix" evidence="3">
    <location>
        <begin position="551"/>
        <end position="564"/>
    </location>
</feature>
<feature type="strand" evidence="3">
    <location>
        <begin position="566"/>
        <end position="572"/>
    </location>
</feature>
<feature type="strand" evidence="3">
    <location>
        <begin position="576"/>
        <end position="584"/>
    </location>
</feature>
<feature type="strand" evidence="3">
    <location>
        <begin position="587"/>
        <end position="594"/>
    </location>
</feature>
<feature type="strand" evidence="3">
    <location>
        <begin position="597"/>
        <end position="600"/>
    </location>
</feature>
<feature type="helix" evidence="3">
    <location>
        <begin position="601"/>
        <end position="603"/>
    </location>
</feature>
<feature type="helix" evidence="3">
    <location>
        <begin position="607"/>
        <end position="615"/>
    </location>
</feature>
<feature type="strand" evidence="3">
    <location>
        <begin position="623"/>
        <end position="629"/>
    </location>
</feature>
<feature type="helix" evidence="3">
    <location>
        <begin position="635"/>
        <end position="644"/>
    </location>
</feature>
<feature type="strand" evidence="3">
    <location>
        <begin position="648"/>
        <end position="650"/>
    </location>
</feature>
<feature type="strand" evidence="3">
    <location>
        <begin position="657"/>
        <end position="659"/>
    </location>
</feature>
<feature type="helix" evidence="3">
    <location>
        <begin position="666"/>
        <end position="668"/>
    </location>
</feature>
<feature type="strand" evidence="3">
    <location>
        <begin position="672"/>
        <end position="674"/>
    </location>
</feature>
<feature type="turn" evidence="3">
    <location>
        <begin position="676"/>
        <end position="678"/>
    </location>
</feature>
<feature type="helix" evidence="3">
    <location>
        <begin position="681"/>
        <end position="694"/>
    </location>
</feature>
<feature type="strand" evidence="3">
    <location>
        <begin position="697"/>
        <end position="706"/>
    </location>
</feature>
<feature type="strand" evidence="3">
    <location>
        <begin position="708"/>
        <end position="710"/>
    </location>
</feature>
<feature type="turn" evidence="3">
    <location>
        <begin position="716"/>
        <end position="718"/>
    </location>
</feature>
<feature type="strand" evidence="3">
    <location>
        <begin position="720"/>
        <end position="727"/>
    </location>
</feature>
<feature type="helix" evidence="3">
    <location>
        <begin position="730"/>
        <end position="734"/>
    </location>
</feature>
<feature type="strand" evidence="3">
    <location>
        <begin position="737"/>
        <end position="739"/>
    </location>
</feature>
<feature type="helix" evidence="3">
    <location>
        <begin position="745"/>
        <end position="752"/>
    </location>
</feature>
<name>GSHAB_PASMU</name>
<keyword id="KW-0002">3D-structure</keyword>
<keyword id="KW-0067">ATP-binding</keyword>
<keyword id="KW-0317">Glutathione biosynthesis</keyword>
<keyword id="KW-0436">Ligase</keyword>
<keyword id="KW-0460">Magnesium</keyword>
<keyword id="KW-0464">Manganese</keyword>
<keyword id="KW-0479">Metal-binding</keyword>
<keyword id="KW-0511">Multifunctional enzyme</keyword>
<keyword id="KW-0547">Nucleotide-binding</keyword>
<keyword id="KW-1185">Reference proteome</keyword>
<gene>
    <name evidence="2" type="primary">gshAB</name>
    <name evidence="2" type="synonym">gshF</name>
    <name type="ordered locus">PM1048</name>
</gene>
<dbReference type="EC" id="6.3.2.2" evidence="2"/>
<dbReference type="EC" id="6.3.2.3" evidence="2"/>
<dbReference type="EMBL" id="AE004439">
    <property type="protein sequence ID" value="AAK03132.1"/>
    <property type="molecule type" value="Genomic_DNA"/>
</dbReference>
<dbReference type="RefSeq" id="WP_010906990.1">
    <property type="nucleotide sequence ID" value="NC_002663.1"/>
</dbReference>
<dbReference type="PDB" id="3LN7">
    <property type="method" value="X-ray"/>
    <property type="resolution" value="3.20 A"/>
    <property type="chains" value="A/B=1-757"/>
</dbReference>
<dbReference type="PDBsum" id="3LN7"/>
<dbReference type="SMR" id="Q9CM00"/>
<dbReference type="STRING" id="272843.PM1048"/>
<dbReference type="EnsemblBacteria" id="AAK03132">
    <property type="protein sequence ID" value="AAK03132"/>
    <property type="gene ID" value="PM1048"/>
</dbReference>
<dbReference type="KEGG" id="pmu:PM1048"/>
<dbReference type="PATRIC" id="fig|272843.6.peg.1062"/>
<dbReference type="HOGENOM" id="CLU_020728_1_0_6"/>
<dbReference type="OrthoDB" id="9803907at2"/>
<dbReference type="SABIO-RK" id="Q9CM00"/>
<dbReference type="UniPathway" id="UPA00142">
    <property type="reaction ID" value="UER00209"/>
</dbReference>
<dbReference type="UniPathway" id="UPA00142">
    <property type="reaction ID" value="UER00210"/>
</dbReference>
<dbReference type="EvolutionaryTrace" id="Q9CM00"/>
<dbReference type="Proteomes" id="UP000000809">
    <property type="component" value="Chromosome"/>
</dbReference>
<dbReference type="GO" id="GO:0005829">
    <property type="term" value="C:cytosol"/>
    <property type="evidence" value="ECO:0007669"/>
    <property type="project" value="TreeGrafter"/>
</dbReference>
<dbReference type="GO" id="GO:0005524">
    <property type="term" value="F:ATP binding"/>
    <property type="evidence" value="ECO:0007669"/>
    <property type="project" value="UniProtKB-UniRule"/>
</dbReference>
<dbReference type="GO" id="GO:0008716">
    <property type="term" value="F:D-alanine-D-alanine ligase activity"/>
    <property type="evidence" value="ECO:0007669"/>
    <property type="project" value="InterPro"/>
</dbReference>
<dbReference type="GO" id="GO:0004357">
    <property type="term" value="F:glutamate-cysteine ligase activity"/>
    <property type="evidence" value="ECO:0007669"/>
    <property type="project" value="UniProtKB-UniRule"/>
</dbReference>
<dbReference type="GO" id="GO:0004363">
    <property type="term" value="F:glutathione synthase activity"/>
    <property type="evidence" value="ECO:0007669"/>
    <property type="project" value="UniProtKB-UniRule"/>
</dbReference>
<dbReference type="GO" id="GO:0046872">
    <property type="term" value="F:metal ion binding"/>
    <property type="evidence" value="ECO:0007669"/>
    <property type="project" value="UniProtKB-KW"/>
</dbReference>
<dbReference type="Gene3D" id="3.30.590.20">
    <property type="match status" value="1"/>
</dbReference>
<dbReference type="Gene3D" id="3.30.470.20">
    <property type="entry name" value="ATP-grasp fold, B domain"/>
    <property type="match status" value="2"/>
</dbReference>
<dbReference type="HAMAP" id="MF_00782">
    <property type="entry name" value="Glut_biosynth"/>
    <property type="match status" value="1"/>
</dbReference>
<dbReference type="InterPro" id="IPR011761">
    <property type="entry name" value="ATP-grasp"/>
</dbReference>
<dbReference type="InterPro" id="IPR011095">
    <property type="entry name" value="Dala_Dala_lig_C"/>
</dbReference>
<dbReference type="InterPro" id="IPR014746">
    <property type="entry name" value="Gln_synth/guanido_kin_cat_dom"/>
</dbReference>
<dbReference type="InterPro" id="IPR007370">
    <property type="entry name" value="Glu_cys_ligase"/>
</dbReference>
<dbReference type="InterPro" id="IPR006335">
    <property type="entry name" value="Glut_biosynth"/>
</dbReference>
<dbReference type="InterPro" id="IPR006334">
    <property type="entry name" value="Glut_cys_ligase"/>
</dbReference>
<dbReference type="InterPro" id="IPR040657">
    <property type="entry name" value="GshAB_ATP-grasp"/>
</dbReference>
<dbReference type="NCBIfam" id="TIGR01435">
    <property type="entry name" value="glu_cys_lig_rel"/>
    <property type="match status" value="1"/>
</dbReference>
<dbReference type="NCBIfam" id="NF002688">
    <property type="entry name" value="PRK02471.1"/>
    <property type="match status" value="1"/>
</dbReference>
<dbReference type="PANTHER" id="PTHR38761">
    <property type="entry name" value="GLUTAMATE--CYSTEINE LIGASE"/>
    <property type="match status" value="1"/>
</dbReference>
<dbReference type="PANTHER" id="PTHR38761:SF1">
    <property type="entry name" value="GLUTAMATE--CYSTEINE LIGASE"/>
    <property type="match status" value="1"/>
</dbReference>
<dbReference type="Pfam" id="PF18419">
    <property type="entry name" value="ATP-grasp_6"/>
    <property type="match status" value="1"/>
</dbReference>
<dbReference type="Pfam" id="PF07478">
    <property type="entry name" value="Dala_Dala_lig_C"/>
    <property type="match status" value="1"/>
</dbReference>
<dbReference type="Pfam" id="PF04262">
    <property type="entry name" value="Glu_cys_ligase"/>
    <property type="match status" value="1"/>
</dbReference>
<dbReference type="SUPFAM" id="SSF55931">
    <property type="entry name" value="Glutamine synthetase/guanido kinase"/>
    <property type="match status" value="1"/>
</dbReference>
<dbReference type="SUPFAM" id="SSF56059">
    <property type="entry name" value="Glutathione synthetase ATP-binding domain-like"/>
    <property type="match status" value="1"/>
</dbReference>
<dbReference type="PROSITE" id="PS50975">
    <property type="entry name" value="ATP_GRASP"/>
    <property type="match status" value="1"/>
</dbReference>
<sequence>MKIQHIIHENQLGLLFQQGSFGLEKESQRVTADGAIVTTPHPAVFGNRRYHPYIQTDFAESQLELITPPTKKLEDTFRWLSVIHEVVQRSLPEEEYIFPLSMPAGLPAEEQIRVAQLDNPEDVAYREYLVKIYGKNKQMVSGIHYNFQLSPDLITRLFRLQNEYQSAVDFQNDLYLKMAKNFLRYQWILLYLLAATPTVESAYFKDGSPLAKGQFVRSLRSSQYGYVNDPEINVSFDSVEKYVESLEHWVSTGKLIAEKEFYSNVRLRGAKKAREFLTTGIQYLEFRLFDLNPFEIYGISLKDAKFIHVFALFMIWMDHTADQEEVELGKARLAEVAFEHPLEKTAYAVEGELVLLELLSMLEQIGAEPELFEIVKEKLTQFTDPSKTVAGRLVRAIEQAGSDQQLGAQLAQQYKAQAFERFYALSAFDNMELSTQALLFDVIQKGIHTEILDENDQFLCLKYGDHIEYVKNGNMTSHDSYISPLIMENKVVTKKVLQKAGFNVPQSVEFTSLEKAVASYALFENRAVVIKPKSTNYGLGITIFQQGVQNREDFAKALEIAFREDKEVMVEDYLVGTEYRFFVLGDETLAVLLRVPANVVGDSVHSVAELVAMKNDHPLRGDGSRTPLKKIALGEIEQLQLKEQGLTIDSIPAKDQLVQLRANSNISTGGDSIDMTDEMHESYKQLAVGITKAMGAAVCGVDLIIPDLKQPATPNLTSWGVIEANFNPMMMMHIFPYAGKSRRLTQNVIKMLFPELE</sequence>
<evidence type="ECO:0000250" key="1"/>
<evidence type="ECO:0000255" key="2">
    <source>
        <dbReference type="HAMAP-Rule" id="MF_00782"/>
    </source>
</evidence>
<evidence type="ECO:0007829" key="3">
    <source>
        <dbReference type="PDB" id="3LN7"/>
    </source>
</evidence>